<sequence length="371" mass="40785">MEKQKLDLSAYQIRTDLAVETKEILEQENDPNVITKDGIQGIVEKEKEEHGIRIRTVEITKEGEALTSKKAGTYLTLEAQGIREKDSEMQEKVVEVFAHHFAQFLKDRGIQTDASCLVVGLGNWNVTPDALGPLTVESLLVTRHLFELQPENVQEGYRPVSSLSPGVMGLTGIETSDIIQGVIERSKPDFVIAIDALAARAVERVNTTIQISDTGIHPGSGVGNKRKELSKETLGIPVIAIGVPTVVDAVTIASDTIDYVLKHFGRELKDDRPSRSLVPAGLTFGKKKVLNEEDLPDEETRQSFLGIVGTLPEEEKRQLIHEVLAPLGQNLMVTPKEVDTFIDDMANVLANGLNTALHQKISQDNMGSYNH</sequence>
<organism>
    <name type="scientific">Bacillus pumilus (strain SAFR-032)</name>
    <dbReference type="NCBI Taxonomy" id="315750"/>
    <lineage>
        <taxon>Bacteria</taxon>
        <taxon>Bacillati</taxon>
        <taxon>Bacillota</taxon>
        <taxon>Bacilli</taxon>
        <taxon>Bacillales</taxon>
        <taxon>Bacillaceae</taxon>
        <taxon>Bacillus</taxon>
    </lineage>
</organism>
<accession>A8FFD9</accession>
<name>GPR_BACP2</name>
<dbReference type="EC" id="3.4.24.78" evidence="1"/>
<dbReference type="EMBL" id="CP000813">
    <property type="protein sequence ID" value="ABV62956.1"/>
    <property type="molecule type" value="Genomic_DNA"/>
</dbReference>
<dbReference type="RefSeq" id="WP_012010636.1">
    <property type="nucleotide sequence ID" value="NZ_VEIS01000005.1"/>
</dbReference>
<dbReference type="SMR" id="A8FFD9"/>
<dbReference type="STRING" id="315750.BPUM_2287"/>
<dbReference type="MEROPS" id="A25.001"/>
<dbReference type="GeneID" id="5621553"/>
<dbReference type="KEGG" id="bpu:BPUM_2287"/>
<dbReference type="eggNOG" id="COG0680">
    <property type="taxonomic scope" value="Bacteria"/>
</dbReference>
<dbReference type="HOGENOM" id="CLU_055087_1_0_9"/>
<dbReference type="OrthoDB" id="9777293at2"/>
<dbReference type="Proteomes" id="UP000001355">
    <property type="component" value="Chromosome"/>
</dbReference>
<dbReference type="GO" id="GO:0004222">
    <property type="term" value="F:metalloendopeptidase activity"/>
    <property type="evidence" value="ECO:0007669"/>
    <property type="project" value="UniProtKB-UniRule"/>
</dbReference>
<dbReference type="GO" id="GO:0006508">
    <property type="term" value="P:proteolysis"/>
    <property type="evidence" value="ECO:0007669"/>
    <property type="project" value="UniProtKB-UniRule"/>
</dbReference>
<dbReference type="GO" id="GO:0009847">
    <property type="term" value="P:spore germination"/>
    <property type="evidence" value="ECO:0007669"/>
    <property type="project" value="UniProtKB-UniRule"/>
</dbReference>
<dbReference type="Gene3D" id="3.40.50.1450">
    <property type="entry name" value="HybD-like"/>
    <property type="match status" value="2"/>
</dbReference>
<dbReference type="HAMAP" id="MF_00626">
    <property type="entry name" value="Germination_prot"/>
    <property type="match status" value="1"/>
</dbReference>
<dbReference type="InterPro" id="IPR023430">
    <property type="entry name" value="Pept_HybD-like_dom_sf"/>
</dbReference>
<dbReference type="InterPro" id="IPR005080">
    <property type="entry name" value="Peptidase_A25"/>
</dbReference>
<dbReference type="NCBIfam" id="TIGR01441">
    <property type="entry name" value="GPR"/>
    <property type="match status" value="1"/>
</dbReference>
<dbReference type="Pfam" id="PF03418">
    <property type="entry name" value="Peptidase_A25"/>
    <property type="match status" value="1"/>
</dbReference>
<dbReference type="PIRSF" id="PIRSF019549">
    <property type="entry name" value="Peptidase_A25"/>
    <property type="match status" value="1"/>
</dbReference>
<dbReference type="SUPFAM" id="SSF53163">
    <property type="entry name" value="HybD-like"/>
    <property type="match status" value="1"/>
</dbReference>
<proteinExistence type="inferred from homology"/>
<reference key="1">
    <citation type="journal article" date="2007" name="PLoS ONE">
        <title>Paradoxical DNA repair and peroxide resistance gene conservation in Bacillus pumilus SAFR-032.</title>
        <authorList>
            <person name="Gioia J."/>
            <person name="Yerrapragada S."/>
            <person name="Qin X."/>
            <person name="Jiang H."/>
            <person name="Igboeli O.C."/>
            <person name="Muzny D."/>
            <person name="Dugan-Rocha S."/>
            <person name="Ding Y."/>
            <person name="Hawes A."/>
            <person name="Liu W."/>
            <person name="Perez L."/>
            <person name="Kovar C."/>
            <person name="Dinh H."/>
            <person name="Lee S."/>
            <person name="Nazareth L."/>
            <person name="Blyth P."/>
            <person name="Holder M."/>
            <person name="Buhay C."/>
            <person name="Tirumalai M.R."/>
            <person name="Liu Y."/>
            <person name="Dasgupta I."/>
            <person name="Bokhetache L."/>
            <person name="Fujita M."/>
            <person name="Karouia F."/>
            <person name="Eswara Moorthy P."/>
            <person name="Siefert J."/>
            <person name="Uzman A."/>
            <person name="Buzumbo P."/>
            <person name="Verma A."/>
            <person name="Zwiya H."/>
            <person name="McWilliams B.D."/>
            <person name="Olowu A."/>
            <person name="Clinkenbeard K.D."/>
            <person name="Newcombe D."/>
            <person name="Golebiewski L."/>
            <person name="Petrosino J.F."/>
            <person name="Nicholson W.L."/>
            <person name="Fox G.E."/>
            <person name="Venkateswaran K."/>
            <person name="Highlander S.K."/>
            <person name="Weinstock G.M."/>
        </authorList>
    </citation>
    <scope>NUCLEOTIDE SEQUENCE [LARGE SCALE GENOMIC DNA]</scope>
    <source>
        <strain>SAFR-032</strain>
    </source>
</reference>
<keyword id="KW-0378">Hydrolase</keyword>
<keyword id="KW-0645">Protease</keyword>
<keyword id="KW-0865">Zymogen</keyword>
<comment type="function">
    <text evidence="1">Initiates the rapid degradation of small, acid-soluble proteins during spore germination.</text>
</comment>
<comment type="catalytic activity">
    <reaction evidence="1">
        <text>Endopeptidase action with P4 Glu or Asp, P1 preferably Glu &gt; Asp, P1' hydrophobic and P2' Ala.</text>
        <dbReference type="EC" id="3.4.24.78"/>
    </reaction>
</comment>
<comment type="subunit">
    <text evidence="1">Homotetramer.</text>
</comment>
<comment type="PTM">
    <text evidence="1">Autoproteolytically processed. The inactive tetrameric zymogen termed p46 autoprocesses to a smaller form termed p41, which is active only during spore germination.</text>
</comment>
<comment type="similarity">
    <text evidence="1">Belongs to the peptidase A25 family.</text>
</comment>
<gene>
    <name evidence="1" type="primary">gpr</name>
    <name type="ordered locus">BPUM_2287</name>
</gene>
<evidence type="ECO:0000255" key="1">
    <source>
        <dbReference type="HAMAP-Rule" id="MF_00626"/>
    </source>
</evidence>
<feature type="propeptide" id="PRO_1000061390" evidence="1">
    <location>
        <begin position="1"/>
        <end position="16"/>
    </location>
</feature>
<feature type="chain" id="PRO_1000061391" description="Germination protease">
    <location>
        <begin position="17"/>
        <end position="371"/>
    </location>
</feature>
<protein>
    <recommendedName>
        <fullName evidence="1">Germination protease</fullName>
        <ecNumber evidence="1">3.4.24.78</ecNumber>
    </recommendedName>
    <alternativeName>
        <fullName evidence="1">GPR endopeptidase</fullName>
    </alternativeName>
    <alternativeName>
        <fullName evidence="1">Germination proteinase</fullName>
    </alternativeName>
    <alternativeName>
        <fullName evidence="1">Spore protease</fullName>
    </alternativeName>
</protein>